<protein>
    <recommendedName>
        <fullName evidence="1">Orotate phosphoribosyltransferase</fullName>
        <shortName evidence="1">OPRT</shortName>
        <shortName evidence="1">OPRTase</shortName>
        <ecNumber evidence="1">2.4.2.10</ecNumber>
    </recommendedName>
</protein>
<evidence type="ECO:0000255" key="1">
    <source>
        <dbReference type="HAMAP-Rule" id="MF_01208"/>
    </source>
</evidence>
<comment type="function">
    <text evidence="1">Catalyzes the transfer of a ribosyl phosphate group from 5-phosphoribose 1-diphosphate to orotate, leading to the formation of orotidine monophosphate (OMP).</text>
</comment>
<comment type="catalytic activity">
    <reaction evidence="1">
        <text>orotidine 5'-phosphate + diphosphate = orotate + 5-phospho-alpha-D-ribose 1-diphosphate</text>
        <dbReference type="Rhea" id="RHEA:10380"/>
        <dbReference type="ChEBI" id="CHEBI:30839"/>
        <dbReference type="ChEBI" id="CHEBI:33019"/>
        <dbReference type="ChEBI" id="CHEBI:57538"/>
        <dbReference type="ChEBI" id="CHEBI:58017"/>
        <dbReference type="EC" id="2.4.2.10"/>
    </reaction>
</comment>
<comment type="cofactor">
    <cofactor evidence="1">
        <name>Mg(2+)</name>
        <dbReference type="ChEBI" id="CHEBI:18420"/>
    </cofactor>
</comment>
<comment type="pathway">
    <text evidence="1">Pyrimidine metabolism; UMP biosynthesis via de novo pathway; UMP from orotate: step 1/2.</text>
</comment>
<comment type="subunit">
    <text evidence="1">Homodimer.</text>
</comment>
<comment type="similarity">
    <text evidence="1">Belongs to the purine/pyrimidine phosphoribosyltransferase family. PyrE subfamily.</text>
</comment>
<gene>
    <name evidence="1" type="primary">pyrE</name>
    <name type="ordered locus">tlr1828</name>
</gene>
<reference key="1">
    <citation type="journal article" date="2002" name="DNA Res.">
        <title>Complete genome structure of the thermophilic cyanobacterium Thermosynechococcus elongatus BP-1.</title>
        <authorList>
            <person name="Nakamura Y."/>
            <person name="Kaneko T."/>
            <person name="Sato S."/>
            <person name="Ikeuchi M."/>
            <person name="Katoh H."/>
            <person name="Sasamoto S."/>
            <person name="Watanabe A."/>
            <person name="Iriguchi M."/>
            <person name="Kawashima K."/>
            <person name="Kimura T."/>
            <person name="Kishida Y."/>
            <person name="Kiyokawa C."/>
            <person name="Kohara M."/>
            <person name="Matsumoto M."/>
            <person name="Matsuno A."/>
            <person name="Nakazaki N."/>
            <person name="Shimpo S."/>
            <person name="Sugimoto M."/>
            <person name="Takeuchi C."/>
            <person name="Yamada M."/>
            <person name="Tabata S."/>
        </authorList>
    </citation>
    <scope>NUCLEOTIDE SEQUENCE [LARGE SCALE GENOMIC DNA]</scope>
    <source>
        <strain>NIES-2133 / IAM M-273 / BP-1</strain>
    </source>
</reference>
<keyword id="KW-0328">Glycosyltransferase</keyword>
<keyword id="KW-0460">Magnesium</keyword>
<keyword id="KW-0665">Pyrimidine biosynthesis</keyword>
<keyword id="KW-1185">Reference proteome</keyword>
<keyword id="KW-0808">Transferase</keyword>
<feature type="chain" id="PRO_0000110757" description="Orotate phosphoribosyltransferase">
    <location>
        <begin position="1"/>
        <end position="189"/>
    </location>
</feature>
<feature type="binding site" evidence="1">
    <location>
        <position position="99"/>
    </location>
    <ligand>
        <name>5-phospho-alpha-D-ribose 1-diphosphate</name>
        <dbReference type="ChEBI" id="CHEBI:58017"/>
        <note>ligand shared between dimeric partners</note>
    </ligand>
</feature>
<feature type="binding site" description="in other chain" evidence="1">
    <location>
        <position position="100"/>
    </location>
    <ligand>
        <name>5-phospho-alpha-D-ribose 1-diphosphate</name>
        <dbReference type="ChEBI" id="CHEBI:58017"/>
        <note>ligand shared between dimeric partners</note>
    </ligand>
</feature>
<feature type="binding site" evidence="1">
    <location>
        <position position="103"/>
    </location>
    <ligand>
        <name>5-phospho-alpha-D-ribose 1-diphosphate</name>
        <dbReference type="ChEBI" id="CHEBI:58017"/>
        <note>ligand shared between dimeric partners</note>
    </ligand>
</feature>
<feature type="binding site" evidence="1">
    <location>
        <position position="105"/>
    </location>
    <ligand>
        <name>5-phospho-alpha-D-ribose 1-diphosphate</name>
        <dbReference type="ChEBI" id="CHEBI:58017"/>
        <note>ligand shared between dimeric partners</note>
    </ligand>
</feature>
<feature type="binding site" description="in other chain" evidence="1">
    <location>
        <begin position="126"/>
        <end position="134"/>
    </location>
    <ligand>
        <name>5-phospho-alpha-D-ribose 1-diphosphate</name>
        <dbReference type="ChEBI" id="CHEBI:58017"/>
        <note>ligand shared between dimeric partners</note>
    </ligand>
</feature>
<feature type="binding site" evidence="1">
    <location>
        <position position="130"/>
    </location>
    <ligand>
        <name>orotate</name>
        <dbReference type="ChEBI" id="CHEBI:30839"/>
    </ligand>
</feature>
<feature type="binding site" evidence="1">
    <location>
        <position position="158"/>
    </location>
    <ligand>
        <name>orotate</name>
        <dbReference type="ChEBI" id="CHEBI:30839"/>
    </ligand>
</feature>
<dbReference type="EC" id="2.4.2.10" evidence="1"/>
<dbReference type="EMBL" id="BA000039">
    <property type="protein sequence ID" value="BAC09380.1"/>
    <property type="molecule type" value="Genomic_DNA"/>
</dbReference>
<dbReference type="RefSeq" id="NP_682618.1">
    <property type="nucleotide sequence ID" value="NC_004113.1"/>
</dbReference>
<dbReference type="RefSeq" id="WP_011057665.1">
    <property type="nucleotide sequence ID" value="NC_004113.1"/>
</dbReference>
<dbReference type="SMR" id="Q8DHW5"/>
<dbReference type="STRING" id="197221.gene:10748433"/>
<dbReference type="EnsemblBacteria" id="BAC09380">
    <property type="protein sequence ID" value="BAC09380"/>
    <property type="gene ID" value="BAC09380"/>
</dbReference>
<dbReference type="KEGG" id="tel:tlr1828"/>
<dbReference type="PATRIC" id="fig|197221.4.peg.1911"/>
<dbReference type="eggNOG" id="COG0461">
    <property type="taxonomic scope" value="Bacteria"/>
</dbReference>
<dbReference type="UniPathway" id="UPA00070">
    <property type="reaction ID" value="UER00119"/>
</dbReference>
<dbReference type="Proteomes" id="UP000000440">
    <property type="component" value="Chromosome"/>
</dbReference>
<dbReference type="GO" id="GO:0000287">
    <property type="term" value="F:magnesium ion binding"/>
    <property type="evidence" value="ECO:0007669"/>
    <property type="project" value="UniProtKB-UniRule"/>
</dbReference>
<dbReference type="GO" id="GO:0004588">
    <property type="term" value="F:orotate phosphoribosyltransferase activity"/>
    <property type="evidence" value="ECO:0007669"/>
    <property type="project" value="UniProtKB-UniRule"/>
</dbReference>
<dbReference type="GO" id="GO:0044205">
    <property type="term" value="P:'de novo' UMP biosynthetic process"/>
    <property type="evidence" value="ECO:0007669"/>
    <property type="project" value="UniProtKB-UniRule"/>
</dbReference>
<dbReference type="GO" id="GO:0019856">
    <property type="term" value="P:pyrimidine nucleobase biosynthetic process"/>
    <property type="evidence" value="ECO:0007669"/>
    <property type="project" value="TreeGrafter"/>
</dbReference>
<dbReference type="CDD" id="cd06223">
    <property type="entry name" value="PRTases_typeI"/>
    <property type="match status" value="1"/>
</dbReference>
<dbReference type="FunFam" id="3.40.50.2020:FF:000029">
    <property type="entry name" value="Orotate phosphoribosyltransferase"/>
    <property type="match status" value="1"/>
</dbReference>
<dbReference type="Gene3D" id="3.40.50.2020">
    <property type="match status" value="1"/>
</dbReference>
<dbReference type="HAMAP" id="MF_01208">
    <property type="entry name" value="PyrE"/>
    <property type="match status" value="1"/>
</dbReference>
<dbReference type="InterPro" id="IPR023031">
    <property type="entry name" value="OPRT"/>
</dbReference>
<dbReference type="InterPro" id="IPR004467">
    <property type="entry name" value="Or_phspho_trans_dom"/>
</dbReference>
<dbReference type="InterPro" id="IPR000836">
    <property type="entry name" value="PRibTrfase_dom"/>
</dbReference>
<dbReference type="InterPro" id="IPR029057">
    <property type="entry name" value="PRTase-like"/>
</dbReference>
<dbReference type="NCBIfam" id="TIGR00336">
    <property type="entry name" value="pyrE"/>
    <property type="match status" value="1"/>
</dbReference>
<dbReference type="PANTHER" id="PTHR19278">
    <property type="entry name" value="OROTATE PHOSPHORIBOSYLTRANSFERASE"/>
    <property type="match status" value="1"/>
</dbReference>
<dbReference type="PANTHER" id="PTHR19278:SF9">
    <property type="entry name" value="URIDINE 5'-MONOPHOSPHATE SYNTHASE"/>
    <property type="match status" value="1"/>
</dbReference>
<dbReference type="SUPFAM" id="SSF53271">
    <property type="entry name" value="PRTase-like"/>
    <property type="match status" value="1"/>
</dbReference>
<sequence length="189" mass="19830">MDESLADLRQELLALLCRDAYRAGDFTLSSGQKSQYYINCKPVTLSARGAYLVGRLFLEQLAPEAVAVAGLTLGADPLVVAVSVLSNLAGQDRAALIVRKEAKGHGTMSFIEGPPLPQGAVVTVLEDVITTGGSALKAVGRLQEAGYVVNEVLGIVDRQGGGAAAFAAQGIPLRSLFQISDLEAYLNRT</sequence>
<name>PYRE_THEVB</name>
<proteinExistence type="inferred from homology"/>
<accession>Q8DHW5</accession>
<organism>
    <name type="scientific">Thermosynechococcus vestitus (strain NIES-2133 / IAM M-273 / BP-1)</name>
    <dbReference type="NCBI Taxonomy" id="197221"/>
    <lineage>
        <taxon>Bacteria</taxon>
        <taxon>Bacillati</taxon>
        <taxon>Cyanobacteriota</taxon>
        <taxon>Cyanophyceae</taxon>
        <taxon>Acaryochloridales</taxon>
        <taxon>Thermosynechococcaceae</taxon>
        <taxon>Thermosynechococcus</taxon>
    </lineage>
</organism>